<accession>Q2G4F5</accession>
<reference key="1">
    <citation type="submission" date="2006-01" db="EMBL/GenBank/DDBJ databases">
        <title>Complete sequence of Novosphingobium aromaticivorans DSM 12444.</title>
        <authorList>
            <consortium name="US DOE Joint Genome Institute"/>
            <person name="Copeland A."/>
            <person name="Lucas S."/>
            <person name="Lapidus A."/>
            <person name="Barry K."/>
            <person name="Detter J.C."/>
            <person name="Glavina T."/>
            <person name="Hammon N."/>
            <person name="Israni S."/>
            <person name="Pitluck S."/>
            <person name="Chain P."/>
            <person name="Malfatti S."/>
            <person name="Shin M."/>
            <person name="Vergez L."/>
            <person name="Schmutz J."/>
            <person name="Larimer F."/>
            <person name="Land M."/>
            <person name="Kyrpides N."/>
            <person name="Ivanova N."/>
            <person name="Fredrickson J."/>
            <person name="Balkwill D."/>
            <person name="Romine M.F."/>
            <person name="Richardson P."/>
        </authorList>
    </citation>
    <scope>NUCLEOTIDE SEQUENCE [LARGE SCALE GENOMIC DNA]</scope>
    <source>
        <strain>ATCC 700278 / DSM 12444 / CCUG 56034 / CIP 105152 / NBRC 16084 / F199</strain>
    </source>
</reference>
<name>GATA_NOVAD</name>
<evidence type="ECO:0000255" key="1">
    <source>
        <dbReference type="HAMAP-Rule" id="MF_00120"/>
    </source>
</evidence>
<evidence type="ECO:0000256" key="2">
    <source>
        <dbReference type="SAM" id="MobiDB-lite"/>
    </source>
</evidence>
<proteinExistence type="inferred from homology"/>
<keyword id="KW-0067">ATP-binding</keyword>
<keyword id="KW-0436">Ligase</keyword>
<keyword id="KW-0547">Nucleotide-binding</keyword>
<keyword id="KW-0648">Protein biosynthesis</keyword>
<keyword id="KW-1185">Reference proteome</keyword>
<dbReference type="EC" id="6.3.5.7" evidence="1"/>
<dbReference type="EMBL" id="CP000248">
    <property type="protein sequence ID" value="ABD27268.1"/>
    <property type="molecule type" value="Genomic_DNA"/>
</dbReference>
<dbReference type="RefSeq" id="WP_011446472.1">
    <property type="nucleotide sequence ID" value="NC_007794.1"/>
</dbReference>
<dbReference type="SMR" id="Q2G4F5"/>
<dbReference type="STRING" id="279238.Saro_2832"/>
<dbReference type="KEGG" id="nar:Saro_2832"/>
<dbReference type="eggNOG" id="COG0154">
    <property type="taxonomic scope" value="Bacteria"/>
</dbReference>
<dbReference type="HOGENOM" id="CLU_009600_0_3_5"/>
<dbReference type="Proteomes" id="UP000009134">
    <property type="component" value="Chromosome"/>
</dbReference>
<dbReference type="GO" id="GO:0030956">
    <property type="term" value="C:glutamyl-tRNA(Gln) amidotransferase complex"/>
    <property type="evidence" value="ECO:0007669"/>
    <property type="project" value="InterPro"/>
</dbReference>
<dbReference type="GO" id="GO:0005524">
    <property type="term" value="F:ATP binding"/>
    <property type="evidence" value="ECO:0007669"/>
    <property type="project" value="UniProtKB-KW"/>
</dbReference>
<dbReference type="GO" id="GO:0050567">
    <property type="term" value="F:glutaminyl-tRNA synthase (glutamine-hydrolyzing) activity"/>
    <property type="evidence" value="ECO:0007669"/>
    <property type="project" value="UniProtKB-UniRule"/>
</dbReference>
<dbReference type="GO" id="GO:0006412">
    <property type="term" value="P:translation"/>
    <property type="evidence" value="ECO:0007669"/>
    <property type="project" value="UniProtKB-UniRule"/>
</dbReference>
<dbReference type="Gene3D" id="3.90.1300.10">
    <property type="entry name" value="Amidase signature (AS) domain"/>
    <property type="match status" value="1"/>
</dbReference>
<dbReference type="HAMAP" id="MF_00120">
    <property type="entry name" value="GatA"/>
    <property type="match status" value="1"/>
</dbReference>
<dbReference type="InterPro" id="IPR000120">
    <property type="entry name" value="Amidase"/>
</dbReference>
<dbReference type="InterPro" id="IPR020556">
    <property type="entry name" value="Amidase_CS"/>
</dbReference>
<dbReference type="InterPro" id="IPR023631">
    <property type="entry name" value="Amidase_dom"/>
</dbReference>
<dbReference type="InterPro" id="IPR036928">
    <property type="entry name" value="AS_sf"/>
</dbReference>
<dbReference type="InterPro" id="IPR004412">
    <property type="entry name" value="GatA"/>
</dbReference>
<dbReference type="NCBIfam" id="TIGR00132">
    <property type="entry name" value="gatA"/>
    <property type="match status" value="1"/>
</dbReference>
<dbReference type="PANTHER" id="PTHR11895:SF151">
    <property type="entry name" value="GLUTAMYL-TRNA(GLN) AMIDOTRANSFERASE SUBUNIT A"/>
    <property type="match status" value="1"/>
</dbReference>
<dbReference type="PANTHER" id="PTHR11895">
    <property type="entry name" value="TRANSAMIDASE"/>
    <property type="match status" value="1"/>
</dbReference>
<dbReference type="Pfam" id="PF01425">
    <property type="entry name" value="Amidase"/>
    <property type="match status" value="1"/>
</dbReference>
<dbReference type="SUPFAM" id="SSF75304">
    <property type="entry name" value="Amidase signature (AS) enzymes"/>
    <property type="match status" value="1"/>
</dbReference>
<dbReference type="PROSITE" id="PS00571">
    <property type="entry name" value="AMIDASES"/>
    <property type="match status" value="1"/>
</dbReference>
<organism>
    <name type="scientific">Novosphingobium aromaticivorans (strain ATCC 700278 / DSM 12444 / CCUG 56034 / CIP 105152 / NBRC 16084 / F199)</name>
    <dbReference type="NCBI Taxonomy" id="279238"/>
    <lineage>
        <taxon>Bacteria</taxon>
        <taxon>Pseudomonadati</taxon>
        <taxon>Pseudomonadota</taxon>
        <taxon>Alphaproteobacteria</taxon>
        <taxon>Sphingomonadales</taxon>
        <taxon>Sphingomonadaceae</taxon>
        <taxon>Novosphingobium</taxon>
    </lineage>
</organism>
<sequence length="494" mass="52104">MTNLTDLGIAAIRDGVARGDFTATEVATAFNAAVEAAQPALNAFIVTTPEEALEAAGKVDADRTAGRPLGKMAGVPIGMKDLFATRGTQTTAASKILEGFMPEYESTVSQKLWDAGAGMLGKLNLDQFAMGSSNETSAFGNVISPWRRPGDTAPLAPGGSSGGSSSAVAARIAPAATGTDTGGSIRQPAAFTGISGIKPTYGRCSRWGIVAFASSLDQAGPMARDVADCAIMLEAMAGFDPKDSTSLDMPVPEWTANLDPDMRGKKVGIPREYRLDGMDPDVARSWEDGIAWLKDAGAEIVEISLPHTKYALPTYYIIAPAEASSNLARYDGVRYGLRDLPEGAGLQDMYAATRAAGFGPEVKRRILIGTYVLSAGFYDAYYTQAQKVRTLISHDFTNAFREVDVILAPTAPSSAFALGEKSADPLEMYLNDVFSVPASLAGLPAMSVPAGLDRNGLPLGLQVIGRAFDEQGVLNAGLALEQRARFSARPAKWW</sequence>
<gene>
    <name evidence="1" type="primary">gatA</name>
    <name type="ordered locus">Saro_2832</name>
</gene>
<feature type="chain" id="PRO_0000241126" description="Glutamyl-tRNA(Gln) amidotransferase subunit A">
    <location>
        <begin position="1"/>
        <end position="494"/>
    </location>
</feature>
<feature type="region of interest" description="Disordered" evidence="2">
    <location>
        <begin position="140"/>
        <end position="168"/>
    </location>
</feature>
<feature type="active site" description="Charge relay system" evidence="1">
    <location>
        <position position="80"/>
    </location>
</feature>
<feature type="active site" description="Charge relay system" evidence="1">
    <location>
        <position position="160"/>
    </location>
</feature>
<feature type="active site" description="Acyl-ester intermediate" evidence="1">
    <location>
        <position position="184"/>
    </location>
</feature>
<comment type="function">
    <text evidence="1">Allows the formation of correctly charged Gln-tRNA(Gln) through the transamidation of misacylated Glu-tRNA(Gln) in organisms which lack glutaminyl-tRNA synthetase. The reaction takes place in the presence of glutamine and ATP through an activated gamma-phospho-Glu-tRNA(Gln).</text>
</comment>
<comment type="catalytic activity">
    <reaction evidence="1">
        <text>L-glutamyl-tRNA(Gln) + L-glutamine + ATP + H2O = L-glutaminyl-tRNA(Gln) + L-glutamate + ADP + phosphate + H(+)</text>
        <dbReference type="Rhea" id="RHEA:17521"/>
        <dbReference type="Rhea" id="RHEA-COMP:9681"/>
        <dbReference type="Rhea" id="RHEA-COMP:9684"/>
        <dbReference type="ChEBI" id="CHEBI:15377"/>
        <dbReference type="ChEBI" id="CHEBI:15378"/>
        <dbReference type="ChEBI" id="CHEBI:29985"/>
        <dbReference type="ChEBI" id="CHEBI:30616"/>
        <dbReference type="ChEBI" id="CHEBI:43474"/>
        <dbReference type="ChEBI" id="CHEBI:58359"/>
        <dbReference type="ChEBI" id="CHEBI:78520"/>
        <dbReference type="ChEBI" id="CHEBI:78521"/>
        <dbReference type="ChEBI" id="CHEBI:456216"/>
        <dbReference type="EC" id="6.3.5.7"/>
    </reaction>
</comment>
<comment type="subunit">
    <text evidence="1">Heterotrimer of A, B and C subunits.</text>
</comment>
<comment type="similarity">
    <text evidence="1">Belongs to the amidase family. GatA subfamily.</text>
</comment>
<protein>
    <recommendedName>
        <fullName evidence="1">Glutamyl-tRNA(Gln) amidotransferase subunit A</fullName>
        <shortName evidence="1">Glu-ADT subunit A</shortName>
        <ecNumber evidence="1">6.3.5.7</ecNumber>
    </recommendedName>
</protein>